<name>TRPS1_HUMAN</name>
<keyword id="KW-0025">Alternative splicing</keyword>
<keyword id="KW-0225">Disease variant</keyword>
<keyword id="KW-0238">DNA-binding</keyword>
<keyword id="KW-1017">Isopeptide bond</keyword>
<keyword id="KW-0479">Metal-binding</keyword>
<keyword id="KW-0539">Nucleus</keyword>
<keyword id="KW-0597">Phosphoprotein</keyword>
<keyword id="KW-1267">Proteomics identification</keyword>
<keyword id="KW-1185">Reference proteome</keyword>
<keyword id="KW-0677">Repeat</keyword>
<keyword id="KW-0678">Repressor</keyword>
<keyword id="KW-0804">Transcription</keyword>
<keyword id="KW-0805">Transcription regulation</keyword>
<keyword id="KW-0832">Ubl conjugation</keyword>
<keyword id="KW-0862">Zinc</keyword>
<keyword id="KW-0863">Zinc-finger</keyword>
<comment type="function">
    <text evidence="8 10">Transcriptional repressor. Binds specifically to GATA sequences and represses expression of GATA-regulated genes at selected sites and stages in vertebrate development. Regulates chondrocyte proliferation and differentiation. Executes multiple functions in proliferating chondrocytes, expanding the region of distal chondrocytes, activating proliferation in columnar cells and supporting the differentiation of columnar into hypertrophic chondrocytes.</text>
</comment>
<comment type="subunit">
    <text evidence="8 11">Interacts with RNF4; regulates TRPS1 repressor activity. Interacts specifically with the activator form of GLI3 (GLI3A) but not with the repressor form (GLI3R).</text>
</comment>
<comment type="interaction">
    <interactant intactId="EBI-2556151">
        <id>Q9UHF7</id>
    </interactant>
    <interactant intactId="EBI-2340927">
        <id>P78317</id>
        <label>RNF4</label>
    </interactant>
    <organismsDiffer>false</organismsDiffer>
    <experiments>2</experiments>
</comment>
<comment type="interaction">
    <interactant intactId="EBI-2556151">
        <id>Q9UHF7</id>
    </interactant>
    <interactant intactId="EBI-6248094">
        <id>Q9Q2G4</id>
        <label>ORF</label>
    </interactant>
    <organismsDiffer>true</organismsDiffer>
    <experiments>3</experiments>
</comment>
<comment type="subcellular location">
    <subcellularLocation>
        <location evidence="8">Nucleus</location>
    </subcellularLocation>
</comment>
<comment type="alternative products">
    <event type="alternative splicing"/>
    <isoform>
        <id>Q9UHF7-1</id>
        <name>1</name>
        <sequence type="displayed"/>
    </isoform>
    <isoform>
        <id>Q9UHF7-2</id>
        <name>2</name>
        <sequence type="described" ref="VSP_037549"/>
    </isoform>
    <isoform>
        <id>Q9UHF7-3</id>
        <name>3</name>
        <sequence type="described" ref="VSP_037550"/>
    </isoform>
</comment>
<comment type="tissue specificity">
    <text>Ubiquitously expressed in the adult. Found in fetal brain, lung, kidney, liver, spleen and thymus. More highly expressed in androgen-dependent than in androgen-independent prostate cancer cells.</text>
</comment>
<comment type="PTM">
    <text evidence="10">Sumoylated. Sumoylation in the repressor domain inhibits the transcription repression activity. Sumoylation on Lys-1201 is the major site. Appears to be sumoylated on multiple sites.</text>
</comment>
<comment type="disease" evidence="9">
    <disease id="DI-02385">
        <name>Tricho-rhino-phalangeal syndrome 1</name>
        <acronym>TRPS1</acronym>
        <description>Autosomal dominant disorder characterized by craniofacial and skeletal abnormalities. It is allelic with tricho-rhino-phalangeal type 3. Typical features include sparse scalp hair, a bulbous tip of the nose, protruding ears, a long flat philtrum and a thin upper vermilion border. Skeletal defects include cone-shaped epiphyses at the phalanges, hip malformations and short stature.</description>
        <dbReference type="MIM" id="190350"/>
    </disease>
    <text>The disease is caused by variants affecting the gene represented in this entry.</text>
</comment>
<comment type="disease">
    <disease id="DI-02005">
        <name>Tricho-rhino-phalangeal syndrome 2</name>
        <acronym>TRPS2</acronym>
        <description>A syndrome that combines the clinical features of tricho-rhino-phalangeal syndrome type 1 and multiple exostoses type 1. Affected individuals manifest multiple dysmorphic facial features including large, laterally protruding ears, a bulbous nose, an elongated upper lip, as well as sparse scalp hair, winged scapulae, multiple cartilaginous exostoses, redundant skin, and intellectual disability.</description>
        <dbReference type="MIM" id="150230"/>
    </disease>
    <text>The gene represented in this entry is involved in disease pathogenesis. A chromosomal aberration resulting in the loss of functional copies of TRPS1 and EXT1 has been found in TRPS2 patients.</text>
</comment>
<comment type="disease" evidence="6 7">
    <disease id="DI-02386">
        <name>Tricho-rhino-phalangeal syndrome 3</name>
        <acronym>TRPS3</acronym>
        <description>Autosomal dominant disorder characterized by craniofacial and skeletal abnormalities. It is allelic with tricho-rhino-phalangeal type 1. In TRPS3 a more severe brachydactyly and growth retardation are observed.</description>
        <dbReference type="MIM" id="190351"/>
    </disease>
    <text>The disease is caused by variants affecting the gene represented in this entry.</text>
</comment>
<comment type="sequence caution" evidence="14">
    <conflict type="erroneous termination">
        <sequence resource="EMBL-CDS" id="AAI25021"/>
    </conflict>
    <text>Truncated C-terminus.</text>
</comment>
<comment type="sequence caution" evidence="14">
    <conflict type="frameshift">
        <sequence resource="EMBL-CDS" id="BAA91441"/>
    </conflict>
</comment>
<organism>
    <name type="scientific">Homo sapiens</name>
    <name type="common">Human</name>
    <dbReference type="NCBI Taxonomy" id="9606"/>
    <lineage>
        <taxon>Eukaryota</taxon>
        <taxon>Metazoa</taxon>
        <taxon>Chordata</taxon>
        <taxon>Craniata</taxon>
        <taxon>Vertebrata</taxon>
        <taxon>Euteleostomi</taxon>
        <taxon>Mammalia</taxon>
        <taxon>Eutheria</taxon>
        <taxon>Euarchontoglires</taxon>
        <taxon>Primates</taxon>
        <taxon>Haplorrhini</taxon>
        <taxon>Catarrhini</taxon>
        <taxon>Hominidae</taxon>
        <taxon>Homo</taxon>
    </lineage>
</organism>
<reference key="1">
    <citation type="journal article" date="2000" name="Nat. Genet.">
        <title>Mutations in a new gene, encoding a zinc-finger protein, cause tricho-rhino-phalangeal syndrome type I.</title>
        <authorList>
            <person name="Momeni P."/>
            <person name="Gloeckner G."/>
            <person name="Schmidt O."/>
            <person name="von Holtum D."/>
            <person name="Albrecht B."/>
            <person name="Gillessen-Kaesbach G."/>
            <person name="Hennekam R.C.M."/>
            <person name="Meinecke P."/>
            <person name="Zabel B."/>
            <person name="Rosenthal A."/>
            <person name="Horsthemke B."/>
            <person name="Luedecke H.-J."/>
        </authorList>
    </citation>
    <scope>NUCLEOTIDE SEQUENCE [MRNA] (ISOFORM 2)</scope>
</reference>
<reference key="2">
    <citation type="journal article" date="2000" name="J. Natl. Cancer Inst.">
        <title>Characterization of a zinc-finger protein and its association with apoptosis in prostate cancer cells.</title>
        <authorList>
            <person name="Chang G.T.G."/>
            <person name="Steenbeek M."/>
            <person name="Schippers E."/>
            <person name="Blok L.J."/>
            <person name="van Weerden W.M."/>
            <person name="van Alewijk D.C.J.G."/>
            <person name="Eussen B.H.J."/>
            <person name="van Steenbrugge G.J."/>
            <person name="Brinkmann A.O."/>
        </authorList>
    </citation>
    <scope>NUCLEOTIDE SEQUENCE [MRNA] (ISOFORM 1)</scope>
    <source>
        <tissue>Prostate</tissue>
    </source>
</reference>
<reference key="3">
    <citation type="journal article" date="2004" name="Nat. Genet.">
        <title>Complete sequencing and characterization of 21,243 full-length human cDNAs.</title>
        <authorList>
            <person name="Ota T."/>
            <person name="Suzuki Y."/>
            <person name="Nishikawa T."/>
            <person name="Otsuki T."/>
            <person name="Sugiyama T."/>
            <person name="Irie R."/>
            <person name="Wakamatsu A."/>
            <person name="Hayashi K."/>
            <person name="Sato H."/>
            <person name="Nagai K."/>
            <person name="Kimura K."/>
            <person name="Makita H."/>
            <person name="Sekine M."/>
            <person name="Obayashi M."/>
            <person name="Nishi T."/>
            <person name="Shibahara T."/>
            <person name="Tanaka T."/>
            <person name="Ishii S."/>
            <person name="Yamamoto J."/>
            <person name="Saito K."/>
            <person name="Kawai Y."/>
            <person name="Isono Y."/>
            <person name="Nakamura Y."/>
            <person name="Nagahari K."/>
            <person name="Murakami K."/>
            <person name="Yasuda T."/>
            <person name="Iwayanagi T."/>
            <person name="Wagatsuma M."/>
            <person name="Shiratori A."/>
            <person name="Sudo H."/>
            <person name="Hosoiri T."/>
            <person name="Kaku Y."/>
            <person name="Kodaira H."/>
            <person name="Kondo H."/>
            <person name="Sugawara M."/>
            <person name="Takahashi M."/>
            <person name="Kanda K."/>
            <person name="Yokoi T."/>
            <person name="Furuya T."/>
            <person name="Kikkawa E."/>
            <person name="Omura Y."/>
            <person name="Abe K."/>
            <person name="Kamihara K."/>
            <person name="Katsuta N."/>
            <person name="Sato K."/>
            <person name="Tanikawa M."/>
            <person name="Yamazaki M."/>
            <person name="Ninomiya K."/>
            <person name="Ishibashi T."/>
            <person name="Yamashita H."/>
            <person name="Murakawa K."/>
            <person name="Fujimori K."/>
            <person name="Tanai H."/>
            <person name="Kimata M."/>
            <person name="Watanabe M."/>
            <person name="Hiraoka S."/>
            <person name="Chiba Y."/>
            <person name="Ishida S."/>
            <person name="Ono Y."/>
            <person name="Takiguchi S."/>
            <person name="Watanabe S."/>
            <person name="Yosida M."/>
            <person name="Hotuta T."/>
            <person name="Kusano J."/>
            <person name="Kanehori K."/>
            <person name="Takahashi-Fujii A."/>
            <person name="Hara H."/>
            <person name="Tanase T.-O."/>
            <person name="Nomura Y."/>
            <person name="Togiya S."/>
            <person name="Komai F."/>
            <person name="Hara R."/>
            <person name="Takeuchi K."/>
            <person name="Arita M."/>
            <person name="Imose N."/>
            <person name="Musashino K."/>
            <person name="Yuuki H."/>
            <person name="Oshima A."/>
            <person name="Sasaki N."/>
            <person name="Aotsuka S."/>
            <person name="Yoshikawa Y."/>
            <person name="Matsunawa H."/>
            <person name="Ichihara T."/>
            <person name="Shiohata N."/>
            <person name="Sano S."/>
            <person name="Moriya S."/>
            <person name="Momiyama H."/>
            <person name="Satoh N."/>
            <person name="Takami S."/>
            <person name="Terashima Y."/>
            <person name="Suzuki O."/>
            <person name="Nakagawa S."/>
            <person name="Senoh A."/>
            <person name="Mizoguchi H."/>
            <person name="Goto Y."/>
            <person name="Shimizu F."/>
            <person name="Wakebe H."/>
            <person name="Hishigaki H."/>
            <person name="Watanabe T."/>
            <person name="Sugiyama A."/>
            <person name="Takemoto M."/>
            <person name="Kawakami B."/>
            <person name="Yamazaki M."/>
            <person name="Watanabe K."/>
            <person name="Kumagai A."/>
            <person name="Itakura S."/>
            <person name="Fukuzumi Y."/>
            <person name="Fujimori Y."/>
            <person name="Komiyama M."/>
            <person name="Tashiro H."/>
            <person name="Tanigami A."/>
            <person name="Fujiwara T."/>
            <person name="Ono T."/>
            <person name="Yamada K."/>
            <person name="Fujii Y."/>
            <person name="Ozaki K."/>
            <person name="Hirao M."/>
            <person name="Ohmori Y."/>
            <person name="Kawabata A."/>
            <person name="Hikiji T."/>
            <person name="Kobatake N."/>
            <person name="Inagaki H."/>
            <person name="Ikema Y."/>
            <person name="Okamoto S."/>
            <person name="Okitani R."/>
            <person name="Kawakami T."/>
            <person name="Noguchi S."/>
            <person name="Itoh T."/>
            <person name="Shigeta K."/>
            <person name="Senba T."/>
            <person name="Matsumura K."/>
            <person name="Nakajima Y."/>
            <person name="Mizuno T."/>
            <person name="Morinaga M."/>
            <person name="Sasaki M."/>
            <person name="Togashi T."/>
            <person name="Oyama M."/>
            <person name="Hata H."/>
            <person name="Watanabe M."/>
            <person name="Komatsu T."/>
            <person name="Mizushima-Sugano J."/>
            <person name="Satoh T."/>
            <person name="Shirai Y."/>
            <person name="Takahashi Y."/>
            <person name="Nakagawa K."/>
            <person name="Okumura K."/>
            <person name="Nagase T."/>
            <person name="Nomura N."/>
            <person name="Kikuchi H."/>
            <person name="Masuho Y."/>
            <person name="Yamashita R."/>
            <person name="Nakai K."/>
            <person name="Yada T."/>
            <person name="Nakamura Y."/>
            <person name="Ohara O."/>
            <person name="Isogai T."/>
            <person name="Sugano S."/>
        </authorList>
    </citation>
    <scope>NUCLEOTIDE SEQUENCE [LARGE SCALE MRNA] (ISOFORM 3)</scope>
    <scope>NUCLEOTIDE SEQUENCE [LARGE SCALE MRNA] OF 495-1281 (ISOFORM 1)</scope>
    <source>
        <tissue>Embryo</tissue>
        <tissue>Trachea</tissue>
    </source>
</reference>
<reference key="4">
    <citation type="journal article" date="2006" name="Nature">
        <title>DNA sequence and analysis of human chromosome 8.</title>
        <authorList>
            <person name="Nusbaum C."/>
            <person name="Mikkelsen T.S."/>
            <person name="Zody M.C."/>
            <person name="Asakawa S."/>
            <person name="Taudien S."/>
            <person name="Garber M."/>
            <person name="Kodira C.D."/>
            <person name="Schueler M.G."/>
            <person name="Shimizu A."/>
            <person name="Whittaker C.A."/>
            <person name="Chang J.L."/>
            <person name="Cuomo C.A."/>
            <person name="Dewar K."/>
            <person name="FitzGerald M.G."/>
            <person name="Yang X."/>
            <person name="Allen N.R."/>
            <person name="Anderson S."/>
            <person name="Asakawa T."/>
            <person name="Blechschmidt K."/>
            <person name="Bloom T."/>
            <person name="Borowsky M.L."/>
            <person name="Butler J."/>
            <person name="Cook A."/>
            <person name="Corum B."/>
            <person name="DeArellano K."/>
            <person name="DeCaprio D."/>
            <person name="Dooley K.T."/>
            <person name="Dorris L. III"/>
            <person name="Engels R."/>
            <person name="Gloeckner G."/>
            <person name="Hafez N."/>
            <person name="Hagopian D.S."/>
            <person name="Hall J.L."/>
            <person name="Ishikawa S.K."/>
            <person name="Jaffe D.B."/>
            <person name="Kamat A."/>
            <person name="Kudoh J."/>
            <person name="Lehmann R."/>
            <person name="Lokitsang T."/>
            <person name="Macdonald P."/>
            <person name="Major J.E."/>
            <person name="Matthews C.D."/>
            <person name="Mauceli E."/>
            <person name="Menzel U."/>
            <person name="Mihalev A.H."/>
            <person name="Minoshima S."/>
            <person name="Murayama Y."/>
            <person name="Naylor J.W."/>
            <person name="Nicol R."/>
            <person name="Nguyen C."/>
            <person name="O'Leary S.B."/>
            <person name="O'Neill K."/>
            <person name="Parker S.C.J."/>
            <person name="Polley A."/>
            <person name="Raymond C.K."/>
            <person name="Reichwald K."/>
            <person name="Rodriguez J."/>
            <person name="Sasaki T."/>
            <person name="Schilhabel M."/>
            <person name="Siddiqui R."/>
            <person name="Smith C.L."/>
            <person name="Sneddon T.P."/>
            <person name="Talamas J.A."/>
            <person name="Tenzin P."/>
            <person name="Topham K."/>
            <person name="Venkataraman V."/>
            <person name="Wen G."/>
            <person name="Yamazaki S."/>
            <person name="Young S.K."/>
            <person name="Zeng Q."/>
            <person name="Zimmer A.R."/>
            <person name="Rosenthal A."/>
            <person name="Birren B.W."/>
            <person name="Platzer M."/>
            <person name="Shimizu N."/>
            <person name="Lander E.S."/>
        </authorList>
    </citation>
    <scope>NUCLEOTIDE SEQUENCE [LARGE SCALE GENOMIC DNA]</scope>
</reference>
<reference key="5">
    <citation type="journal article" date="2004" name="Genome Res.">
        <title>The status, quality, and expansion of the NIH full-length cDNA project: the Mammalian Gene Collection (MGC).</title>
        <authorList>
            <consortium name="The MGC Project Team"/>
        </authorList>
    </citation>
    <scope>NUCLEOTIDE SEQUENCE [LARGE SCALE MRNA] (ISOFORM 1)</scope>
</reference>
<reference key="6">
    <citation type="journal article" date="2003" name="J. Biol. Chem.">
        <title>The RING finger protein RNF4, a co-regulator of transcription, interacts with the TRPS1 transcription factor.</title>
        <authorList>
            <person name="Kaiser F.J."/>
            <person name="Moeroey T."/>
            <person name="Chang G.T."/>
            <person name="Horsthemke B."/>
            <person name="Luedecke H.J."/>
        </authorList>
    </citation>
    <scope>FUNCTION</scope>
    <scope>INTERACTION WITH RNF4</scope>
    <scope>SUBCELLULAR LOCATION</scope>
</reference>
<reference key="7">
    <citation type="journal article" date="2006" name="Cell">
        <title>Global, in vivo, and site-specific phosphorylation dynamics in signaling networks.</title>
        <authorList>
            <person name="Olsen J.V."/>
            <person name="Blagoev B."/>
            <person name="Gnad F."/>
            <person name="Macek B."/>
            <person name="Kumar C."/>
            <person name="Mortensen P."/>
            <person name="Mann M."/>
        </authorList>
    </citation>
    <scope>PHOSPHORYLATION [LARGE SCALE ANALYSIS] AT SER-1085</scope>
    <scope>IDENTIFICATION BY MASS SPECTROMETRY [LARGE SCALE ANALYSIS]</scope>
    <source>
        <tissue>Cervix carcinoma</tissue>
    </source>
</reference>
<reference key="8">
    <citation type="journal article" date="2007" name="Biol. Chem.">
        <title>SUMOylation modulates transcriptional repression by TRPS1.</title>
        <authorList>
            <person name="Kaiser F.J."/>
            <person name="Ludecke H.J."/>
            <person name="Weger S."/>
        </authorList>
    </citation>
    <scope>SUMOYLATION AT LYS-1192 AND LYS-1201</scope>
    <scope>FUNCTION</scope>
    <scope>MUTAGENESIS OF LYS-1192 AND LYS-1201</scope>
</reference>
<reference key="9">
    <citation type="journal article" date="2009" name="Anal. Chem.">
        <title>Lys-N and trypsin cover complementary parts of the phosphoproteome in a refined SCX-based approach.</title>
        <authorList>
            <person name="Gauci S."/>
            <person name="Helbig A.O."/>
            <person name="Slijper M."/>
            <person name="Krijgsveld J."/>
            <person name="Heck A.J."/>
            <person name="Mohammed S."/>
        </authorList>
    </citation>
    <scope>IDENTIFICATION BY MASS SPECTROMETRY [LARGE SCALE ANALYSIS]</scope>
</reference>
<reference key="10">
    <citation type="journal article" date="2009" name="Dev. Biol.">
        <title>Trps1, a regulator of chondrocyte proliferation and differentiation, interacts with the activator form of Gli3.</title>
        <authorList>
            <person name="Wuelling M."/>
            <person name="Kaiser F.J."/>
            <person name="Buelens L.A."/>
            <person name="Braunholz D."/>
            <person name="Shivdasani R.A."/>
            <person name="Depping R."/>
            <person name="Vortkamp A."/>
        </authorList>
    </citation>
    <scope>INTERACTION WITH GLI3</scope>
</reference>
<reference key="11">
    <citation type="journal article" date="2010" name="Sci. Signal.">
        <title>Quantitative phosphoproteomics reveals widespread full phosphorylation site occupancy during mitosis.</title>
        <authorList>
            <person name="Olsen J.V."/>
            <person name="Vermeulen M."/>
            <person name="Santamaria A."/>
            <person name="Kumar C."/>
            <person name="Miller M.L."/>
            <person name="Jensen L.J."/>
            <person name="Gnad F."/>
            <person name="Cox J."/>
            <person name="Jensen T.S."/>
            <person name="Nigg E.A."/>
            <person name="Brunak S."/>
            <person name="Mann M."/>
        </authorList>
    </citation>
    <scope>PHOSPHORYLATION [LARGE SCALE ANALYSIS] AT THR-751; SER-1041 AND SER-1085</scope>
    <scope>IDENTIFICATION BY MASS SPECTROMETRY [LARGE SCALE ANALYSIS]</scope>
    <source>
        <tissue>Cervix carcinoma</tissue>
    </source>
</reference>
<reference key="12">
    <citation type="journal article" date="2011" name="BMC Syst. Biol.">
        <title>Initial characterization of the human central proteome.</title>
        <authorList>
            <person name="Burkard T.R."/>
            <person name="Planyavsky M."/>
            <person name="Kaupe I."/>
            <person name="Breitwieser F.P."/>
            <person name="Buerckstuemmer T."/>
            <person name="Bennett K.L."/>
            <person name="Superti-Furga G."/>
            <person name="Colinge J."/>
        </authorList>
    </citation>
    <scope>IDENTIFICATION BY MASS SPECTROMETRY [LARGE SCALE ANALYSIS]</scope>
</reference>
<reference key="13">
    <citation type="journal article" date="2013" name="J. Proteome Res.">
        <title>Toward a comprehensive characterization of a human cancer cell phosphoproteome.</title>
        <authorList>
            <person name="Zhou H."/>
            <person name="Di Palma S."/>
            <person name="Preisinger C."/>
            <person name="Peng M."/>
            <person name="Polat A.N."/>
            <person name="Heck A.J."/>
            <person name="Mohammed S."/>
        </authorList>
    </citation>
    <scope>PHOSPHORYLATION [LARGE SCALE ANALYSIS] AT SER-90; SER-127; SER-178; THR-751; SER-978; SER-1066 AND SER-1085</scope>
    <scope>IDENTIFICATION BY MASS SPECTROMETRY [LARGE SCALE ANALYSIS]</scope>
    <source>
        <tissue>Erythroleukemia</tissue>
    </source>
</reference>
<reference key="14">
    <citation type="journal article" date="2014" name="Nat. Struct. Mol. Biol.">
        <title>Uncovering global SUMOylation signaling networks in a site-specific manner.</title>
        <authorList>
            <person name="Hendriks I.A."/>
            <person name="D'Souza R.C."/>
            <person name="Yang B."/>
            <person name="Verlaan-de Vries M."/>
            <person name="Mann M."/>
            <person name="Vertegaal A.C."/>
        </authorList>
    </citation>
    <scope>SUMOYLATION [LARGE SCALE ANALYSIS] AT LYS-766; LYS-850 AND LYS-1201</scope>
    <scope>IDENTIFICATION BY MASS SPECTROMETRY [LARGE SCALE ANALYSIS]</scope>
</reference>
<reference key="15">
    <citation type="journal article" date="2014" name="Proc. Natl. Acad. Sci. U.S.A.">
        <title>Mapping of SUMO sites and analysis of SUMOylation changes induced by external stimuli.</title>
        <authorList>
            <person name="Impens F."/>
            <person name="Radoshevich L."/>
            <person name="Cossart P."/>
            <person name="Ribet D."/>
        </authorList>
    </citation>
    <scope>SUMOYLATION [LARGE SCALE ANALYSIS] AT LYS-766 AND LYS-1201</scope>
    <scope>IDENTIFICATION BY MASS SPECTROMETRY [LARGE SCALE ANALYSIS]</scope>
</reference>
<reference key="16">
    <citation type="journal article" date="2015" name="Cell Rep.">
        <title>SUMO-2 orchestrates chromatin modifiers in response to DNA damage.</title>
        <authorList>
            <person name="Hendriks I.A."/>
            <person name="Treffers L.W."/>
            <person name="Verlaan-de Vries M."/>
            <person name="Olsen J.V."/>
            <person name="Vertegaal A.C."/>
        </authorList>
    </citation>
    <scope>SUMOYLATION [LARGE SCALE ANALYSIS] AT LYS-766; LYS-1003 AND LYS-1201</scope>
    <scope>IDENTIFICATION BY MASS SPECTROMETRY [LARGE SCALE ANALYSIS]</scope>
</reference>
<reference key="17">
    <citation type="journal article" date="2015" name="Mol. Cell. Proteomics">
        <title>System-wide analysis of SUMOylation dynamics in response to replication stress reveals novel small ubiquitin-like modified target proteins and acceptor lysines relevant for genome stability.</title>
        <authorList>
            <person name="Xiao Z."/>
            <person name="Chang J.G."/>
            <person name="Hendriks I.A."/>
            <person name="Sigurdsson J.O."/>
            <person name="Olsen J.V."/>
            <person name="Vertegaal A.C."/>
        </authorList>
    </citation>
    <scope>SUMOYLATION [LARGE SCALE ANALYSIS] AT LYS-766 AND LYS-1201</scope>
    <scope>IDENTIFICATION BY MASS SPECTROMETRY [LARGE SCALE ANALYSIS]</scope>
</reference>
<reference key="18">
    <citation type="journal article" date="2017" name="Nat. Struct. Mol. Biol.">
        <title>Site-specific mapping of the human SUMO proteome reveals co-modification with phosphorylation.</title>
        <authorList>
            <person name="Hendriks I.A."/>
            <person name="Lyon D."/>
            <person name="Young C."/>
            <person name="Jensen L.J."/>
            <person name="Vertegaal A.C."/>
            <person name="Nielsen M.L."/>
        </authorList>
    </citation>
    <scope>SUMOYLATION [LARGE SCALE ANALYSIS] AT LYS-29; LYS-76; LYS-263; LYS-418; LYS-457; LYS-474; LYS-488; LYS-645; LYS-737; LYS-755; LYS-766; LYS-825; LYS-850; LYS-877; LYS-879; LYS-925; LYS-937; LYS-965; LYS-1003; LYS-1012; LYS-1030; LYS-1040; LYS-1070; LYS-1192 AND LYS-1201</scope>
    <scope>IDENTIFICATION BY MASS SPECTROMETRY [LARGE SCALE ANALYSIS]</scope>
</reference>
<reference key="19">
    <citation type="journal article" date="2001" name="Am. J. Hum. Genet.">
        <title>Genotypic and phenotypic spectrum in tricho-rhino-phalangeal syndrome types I and III.</title>
        <authorList>
            <person name="Luedecke H.-J."/>
            <person name="Schaper J."/>
            <person name="Meinecke P."/>
            <person name="Momeni P."/>
            <person name="Gross S."/>
            <person name="von Holtum D."/>
            <person name="Hirche H."/>
            <person name="Abramowicz M.J."/>
            <person name="Albrecht B."/>
            <person name="Apacik C."/>
            <person name="Christen H.-J."/>
            <person name="Claussen U."/>
            <person name="Devriendt K."/>
            <person name="Fastnacht E."/>
            <person name="Forderer A."/>
            <person name="Friedrich U."/>
            <person name="Goodship T.H.J."/>
            <person name="Greiwe M."/>
            <person name="Hamm H."/>
            <person name="Hennekam R.C.M."/>
            <person name="Hinkel G.K."/>
            <person name="Hoeltzenbein M."/>
            <person name="Kayserili H."/>
            <person name="Majewski F."/>
            <person name="Mathieu M."/>
            <person name="McLeod R."/>
            <person name="Midro A.T."/>
            <person name="Moog U."/>
            <person name="Nagai T."/>
            <person name="Niikawa N."/>
            <person name="Oerstavik K.H."/>
            <person name="Ploechl E."/>
            <person name="Seitz C."/>
            <person name="Schmidtke J."/>
            <person name="Tranebjaerg L."/>
            <person name="Tsukahara M."/>
            <person name="Wittwer B."/>
            <person name="Zabel B."/>
            <person name="Gillessen-Kaesbach G."/>
            <person name="Horsthemke B."/>
        </authorList>
    </citation>
    <scope>VARIANTS TRPS3 ASP-894; PRO-901; GLN-908; PRO-908 AND THR-919</scope>
</reference>
<reference key="20">
    <citation type="journal article" date="2002" name="Am. J. Med. Genet.">
        <title>Missense mutation of TRPS1 in a family of tricho-rhino-phalangeal syndrome type III.</title>
        <authorList>
            <person name="Kobayashi H."/>
            <person name="Hino M."/>
            <person name="Shimodahira M."/>
            <person name="Iwakura T."/>
            <person name="Ishihara T."/>
            <person name="Ikekubo K."/>
            <person name="Ogawa Y."/>
            <person name="Nakao K."/>
            <person name="Kurahachi H."/>
        </authorList>
    </citation>
    <scope>VARIANT TRPS3 GLN-908</scope>
</reference>
<reference key="21">
    <citation type="journal article" date="2004" name="Eur. J. Hum. Genet.">
        <title>Novel missense mutations in the TRPS1 transcription factor define the nuclear localization signal.</title>
        <authorList>
            <person name="Kaiser F.J."/>
            <person name="Brega P."/>
            <person name="Raff M.L."/>
            <person name="Byers P.H."/>
            <person name="Gallati S."/>
            <person name="Kay T.T."/>
            <person name="de Almeida S."/>
            <person name="Horsthemke B."/>
            <person name="Luedecke H.-J."/>
        </authorList>
    </citation>
    <scope>VARIANTS TRPS1 CYS-952 AND HIS-952</scope>
    <scope>CHARACTERIZATION OF VARIANTS TRPS1 CYS-952 AND HIS-952</scope>
</reference>
<feature type="chain" id="PRO_0000083508" description="Zinc finger transcription factor Trps1">
    <location>
        <begin position="1"/>
        <end position="1281"/>
    </location>
</feature>
<feature type="zinc finger region" description="C2H2-type 1; atypical" evidence="3">
    <location>
        <begin position="222"/>
        <end position="247"/>
    </location>
</feature>
<feature type="zinc finger region" description="C2H2-type 2; atypical" evidence="3">
    <location>
        <begin position="333"/>
        <end position="358"/>
    </location>
</feature>
<feature type="zinc finger region" description="C2H2-type 3; atypical" evidence="3">
    <location>
        <begin position="614"/>
        <end position="637"/>
    </location>
</feature>
<feature type="zinc finger region" description="C2H2-type 4" evidence="3">
    <location>
        <begin position="666"/>
        <end position="689"/>
    </location>
</feature>
<feature type="zinc finger region" description="C2H2-type 5" evidence="3">
    <location>
        <begin position="692"/>
        <end position="715"/>
    </location>
</feature>
<feature type="zinc finger region" description="GATA-type" evidence="4">
    <location>
        <begin position="896"/>
        <end position="920"/>
    </location>
</feature>
<feature type="zinc finger region" description="C2H2-type 6" evidence="3">
    <location>
        <begin position="1215"/>
        <end position="1237"/>
    </location>
</feature>
<feature type="zinc finger region" description="C2H2-type 7" evidence="3">
    <location>
        <begin position="1243"/>
        <end position="1267"/>
    </location>
</feature>
<feature type="region of interest" description="Disordered" evidence="5">
    <location>
        <begin position="1"/>
        <end position="198"/>
    </location>
</feature>
<feature type="region of interest" description="Disordered" evidence="5">
    <location>
        <begin position="365"/>
        <end position="394"/>
    </location>
</feature>
<feature type="region of interest" description="Disordered" evidence="5">
    <location>
        <begin position="483"/>
        <end position="512"/>
    </location>
</feature>
<feature type="region of interest" description="Mediates interaction with GLI3" evidence="11">
    <location>
        <begin position="635"/>
        <end position="819"/>
    </location>
</feature>
<feature type="region of interest" description="Disordered" evidence="5">
    <location>
        <begin position="856"/>
        <end position="887"/>
    </location>
</feature>
<feature type="region of interest" description="Disordered" evidence="5">
    <location>
        <begin position="961"/>
        <end position="1000"/>
    </location>
</feature>
<feature type="region of interest" description="Mediates interaction with RNF4" evidence="1">
    <location>
        <begin position="985"/>
        <end position="1184"/>
    </location>
</feature>
<feature type="region of interest" description="Disordered" evidence="5">
    <location>
        <begin position="1039"/>
        <end position="1080"/>
    </location>
</feature>
<feature type="region of interest" description="Transcriptional repressor domain" evidence="1">
    <location>
        <begin position="1163"/>
        <end position="1281"/>
    </location>
</feature>
<feature type="region of interest" description="Disordered" evidence="5">
    <location>
        <begin position="1168"/>
        <end position="1196"/>
    </location>
</feature>
<feature type="compositionally biased region" description="Polar residues" evidence="5">
    <location>
        <begin position="40"/>
        <end position="49"/>
    </location>
</feature>
<feature type="compositionally biased region" description="Basic and acidic residues" evidence="5">
    <location>
        <begin position="53"/>
        <end position="63"/>
    </location>
</feature>
<feature type="compositionally biased region" description="Basic and acidic residues" evidence="5">
    <location>
        <begin position="148"/>
        <end position="162"/>
    </location>
</feature>
<feature type="compositionally biased region" description="Polar residues" evidence="5">
    <location>
        <begin position="163"/>
        <end position="189"/>
    </location>
</feature>
<feature type="compositionally biased region" description="Polar residues" evidence="5">
    <location>
        <begin position="380"/>
        <end position="391"/>
    </location>
</feature>
<feature type="compositionally biased region" description="Basic and acidic residues" evidence="5">
    <location>
        <begin position="488"/>
        <end position="512"/>
    </location>
</feature>
<feature type="compositionally biased region" description="Polar residues" evidence="5">
    <location>
        <begin position="961"/>
        <end position="977"/>
    </location>
</feature>
<feature type="compositionally biased region" description="Basic and acidic residues" evidence="5">
    <location>
        <begin position="980"/>
        <end position="995"/>
    </location>
</feature>
<feature type="compositionally biased region" description="Polar residues" evidence="5">
    <location>
        <begin position="1040"/>
        <end position="1049"/>
    </location>
</feature>
<feature type="compositionally biased region" description="Low complexity" evidence="5">
    <location>
        <begin position="1050"/>
        <end position="1059"/>
    </location>
</feature>
<feature type="compositionally biased region" description="Basic and acidic residues" evidence="5">
    <location>
        <begin position="1060"/>
        <end position="1072"/>
    </location>
</feature>
<feature type="modified residue" description="Phosphoserine" evidence="17">
    <location>
        <position position="90"/>
    </location>
</feature>
<feature type="modified residue" description="Phosphoserine" evidence="17">
    <location>
        <position position="127"/>
    </location>
</feature>
<feature type="modified residue" description="Phosphoserine" evidence="17">
    <location>
        <position position="178"/>
    </location>
</feature>
<feature type="modified residue" description="Phosphoserine" evidence="2">
    <location>
        <position position="216"/>
    </location>
</feature>
<feature type="modified residue" description="Phosphothreonine" evidence="16 17">
    <location>
        <position position="751"/>
    </location>
</feature>
<feature type="modified residue" description="Phosphoserine" evidence="17">
    <location>
        <position position="978"/>
    </location>
</feature>
<feature type="modified residue" description="Phosphoserine" evidence="16">
    <location>
        <position position="1041"/>
    </location>
</feature>
<feature type="modified residue" description="Phosphoserine" evidence="17">
    <location>
        <position position="1066"/>
    </location>
</feature>
<feature type="modified residue" description="Phosphoserine" evidence="15 16 17">
    <location>
        <position position="1085"/>
    </location>
</feature>
<feature type="cross-link" description="Glycyl lysine isopeptide (Lys-Gly) (interchain with G-Cter in SUMO2)" evidence="22">
    <location>
        <position position="29"/>
    </location>
</feature>
<feature type="cross-link" description="Glycyl lysine isopeptide (Lys-Gly) (interchain with G-Cter in SUMO2)" evidence="22">
    <location>
        <position position="76"/>
    </location>
</feature>
<feature type="cross-link" description="Glycyl lysine isopeptide (Lys-Gly) (interchain with G-Cter in SUMO2)" evidence="22">
    <location>
        <position position="263"/>
    </location>
</feature>
<feature type="cross-link" description="Glycyl lysine isopeptide (Lys-Gly) (interchain with G-Cter in SUMO2)" evidence="22">
    <location>
        <position position="418"/>
    </location>
</feature>
<feature type="cross-link" description="Glycyl lysine isopeptide (Lys-Gly) (interchain with G-Cter in SUMO2)" evidence="22">
    <location>
        <position position="457"/>
    </location>
</feature>
<feature type="cross-link" description="Glycyl lysine isopeptide (Lys-Gly) (interchain with G-Cter in SUMO2)" evidence="22">
    <location>
        <position position="474"/>
    </location>
</feature>
<feature type="cross-link" description="Glycyl lysine isopeptide (Lys-Gly) (interchain with G-Cter in SUMO2)" evidence="22">
    <location>
        <position position="488"/>
    </location>
</feature>
<feature type="cross-link" description="Glycyl lysine isopeptide (Lys-Gly) (interchain with G-Cter in SUMO2)" evidence="22">
    <location>
        <position position="645"/>
    </location>
</feature>
<feature type="cross-link" description="Glycyl lysine isopeptide (Lys-Gly) (interchain with G-Cter in SUMO2)" evidence="22">
    <location>
        <position position="737"/>
    </location>
</feature>
<feature type="cross-link" description="Glycyl lysine isopeptide (Lys-Gly) (interchain with G-Cter in SUMO2)" evidence="22">
    <location>
        <position position="755"/>
    </location>
</feature>
<feature type="cross-link" description="Glycyl lysine isopeptide (Lys-Gly) (interchain with G-Cter in SUMO1); alternate" evidence="18">
    <location>
        <position position="766"/>
    </location>
</feature>
<feature type="cross-link" description="Glycyl lysine isopeptide (Lys-Gly) (interchain with G-Cter in SUMO2); alternate" evidence="18 19 20 21 22">
    <location>
        <position position="766"/>
    </location>
</feature>
<feature type="cross-link" description="Glycyl lysine isopeptide (Lys-Gly) (interchain with G-Cter in SUMO2)" evidence="22">
    <location>
        <position position="825"/>
    </location>
</feature>
<feature type="cross-link" description="Glycyl lysine isopeptide (Lys-Gly) (interchain with G-Cter in SUMO2)" evidence="19 22">
    <location>
        <position position="850"/>
    </location>
</feature>
<feature type="cross-link" description="Glycyl lysine isopeptide (Lys-Gly) (interchain with G-Cter in SUMO2)" evidence="22">
    <location>
        <position position="877"/>
    </location>
</feature>
<feature type="cross-link" description="Glycyl lysine isopeptide (Lys-Gly) (interchain with G-Cter in SUMO2)" evidence="22">
    <location>
        <position position="879"/>
    </location>
</feature>
<feature type="cross-link" description="Glycyl lysine isopeptide (Lys-Gly) (interchain with G-Cter in SUMO2)" evidence="22">
    <location>
        <position position="925"/>
    </location>
</feature>
<feature type="cross-link" description="Glycyl lysine isopeptide (Lys-Gly) (interchain with G-Cter in SUMO2)" evidence="22">
    <location>
        <position position="937"/>
    </location>
</feature>
<feature type="cross-link" description="Glycyl lysine isopeptide (Lys-Gly) (interchain with G-Cter in SUMO2)" evidence="22">
    <location>
        <position position="965"/>
    </location>
</feature>
<feature type="cross-link" description="Glycyl lysine isopeptide (Lys-Gly) (interchain with G-Cter in SUMO2)" evidence="21 22">
    <location>
        <position position="1003"/>
    </location>
</feature>
<feature type="cross-link" description="Glycyl lysine isopeptide (Lys-Gly) (interchain with G-Cter in SUMO2)" evidence="22">
    <location>
        <position position="1012"/>
    </location>
</feature>
<feature type="cross-link" description="Glycyl lysine isopeptide (Lys-Gly) (interchain with G-Cter in SUMO2)" evidence="22">
    <location>
        <position position="1030"/>
    </location>
</feature>
<feature type="cross-link" description="Glycyl lysine isopeptide (Lys-Gly) (interchain with G-Cter in SUMO2)" evidence="22">
    <location>
        <position position="1040"/>
    </location>
</feature>
<feature type="cross-link" description="Glycyl lysine isopeptide (Lys-Gly) (interchain with G-Cter in SUMO2)" evidence="22">
    <location>
        <position position="1070"/>
    </location>
</feature>
<feature type="cross-link" description="Glycyl lysine isopeptide (Lys-Gly) (interchain with G-Cter in SUMO); alternate" evidence="10">
    <location>
        <position position="1192"/>
    </location>
</feature>
<feature type="cross-link" description="Glycyl lysine isopeptide (Lys-Gly) (interchain with G-Cter in SUMO2); alternate" evidence="22">
    <location>
        <position position="1192"/>
    </location>
</feature>
<feature type="cross-link" description="Glycyl lysine isopeptide (Lys-Gly) (interchain with G-Cter in SUMO); alternate">
    <location>
        <position position="1201"/>
    </location>
</feature>
<feature type="cross-link" description="Glycyl lysine isopeptide (Lys-Gly) (interchain with G-Cter in SUMO1); alternate" evidence="18">
    <location>
        <position position="1201"/>
    </location>
</feature>
<feature type="cross-link" description="Glycyl lysine isopeptide (Lys-Gly) (interchain with G-Cter in SUMO2); alternate" evidence="19 20 21 22">
    <location>
        <position position="1201"/>
    </location>
</feature>
<feature type="splice variant" id="VSP_037549" description="In isoform 2." evidence="12">
    <original>M</original>
    <variation>MPYEVNAGYDFTNM</variation>
    <location>
        <position position="1"/>
    </location>
</feature>
<feature type="splice variant" id="VSP_037550" description="In isoform 3." evidence="13">
    <original>M</original>
    <variation>MQSNM</variation>
    <location>
        <position position="1"/>
    </location>
</feature>
<feature type="sequence variant" id="VAR_038197" description="In dbSNP:rs7002384.">
    <original>S</original>
    <variation>L</variation>
    <location>
        <position position="654"/>
    </location>
</feature>
<feature type="sequence variant" id="VAR_012807" description="In TRPS3; in heterozygous status has a milder effect causing TRPS1." evidence="6">
    <original>V</original>
    <variation>D</variation>
    <location>
        <position position="894"/>
    </location>
</feature>
<feature type="sequence variant" id="VAR_012808" description="In TRPS3; severe; dbSNP:rs121908433." evidence="6">
    <original>T</original>
    <variation>P</variation>
    <location>
        <position position="901"/>
    </location>
</feature>
<feature type="sequence variant" id="VAR_012809" description="In TRPS3; severe." evidence="6">
    <original>R</original>
    <variation>P</variation>
    <location>
        <position position="908"/>
    </location>
</feature>
<feature type="sequence variant" id="VAR_012810" description="In TRPS3; dbSNP:rs121908435." evidence="6 7">
    <original>R</original>
    <variation>Q</variation>
    <location>
        <position position="908"/>
    </location>
</feature>
<feature type="sequence variant" id="VAR_012811" description="In TRPS3; dbSNP:rs1057518972." evidence="6">
    <original>A</original>
    <variation>T</variation>
    <location>
        <position position="919"/>
    </location>
</feature>
<feature type="sequence variant" id="VAR_038198" description="In TRPS1; prevents the transport into the nucleus and thus reduces the nuclear TRPS1 concentration consistent with haploinsufficiency; dbSNP:rs28939069." evidence="9">
    <original>R</original>
    <variation>C</variation>
    <location>
        <position position="952"/>
    </location>
</feature>
<feature type="sequence variant" id="VAR_038199" description="In TRPS1; prevents the transport into the nucleus and thus reduces the nuclear TRPS1 concentration consistent with haploinsufficiency; dbSNP:rs28939070." evidence="9">
    <original>R</original>
    <variation>H</variation>
    <location>
        <position position="952"/>
    </location>
</feature>
<feature type="mutagenesis site" description="Very little change in sumoylation and 30% reduction in repression activity. Almost complete loss of sumoylation and 70% reduction in repression activity; when associated with R-1201." evidence="10">
    <original>K</original>
    <variation>R</variation>
    <location>
        <position position="1192"/>
    </location>
</feature>
<feature type="mutagenesis site" description="Great loss of sumoylation and 30% reduction in repression activity. Almost complete loss of sumoylation and 70% reduction in repression activity; when associated with R-1192." evidence="10">
    <original>K</original>
    <variation>R</variation>
    <location>
        <position position="1201"/>
    </location>
</feature>
<feature type="sequence conflict" description="In Ref. 1; AAF23614." evidence="14" ref="1">
    <original>S</original>
    <variation>F</variation>
    <location>
        <position position="115"/>
    </location>
</feature>
<feature type="sequence conflict" description="In Ref. 3; BAG64957." evidence="14" ref="3">
    <original>T</original>
    <variation>A</variation>
    <location>
        <position position="582"/>
    </location>
</feature>
<gene>
    <name type="primary">TRPS1</name>
</gene>
<proteinExistence type="evidence at protein level"/>
<accession>Q9UHF7</accession>
<accession>B4E1Z5</accession>
<accession>Q08AU2</accession>
<accession>Q9NWE1</accession>
<accession>Q9UHH6</accession>
<dbReference type="EMBL" id="AF183810">
    <property type="protein sequence ID" value="AAF23614.1"/>
    <property type="molecule type" value="mRNA"/>
</dbReference>
<dbReference type="EMBL" id="AF264784">
    <property type="protein sequence ID" value="AAG21134.1"/>
    <property type="molecule type" value="mRNA"/>
</dbReference>
<dbReference type="EMBL" id="AK000948">
    <property type="protein sequence ID" value="BAA91441.1"/>
    <property type="status" value="ALT_FRAME"/>
    <property type="molecule type" value="mRNA"/>
</dbReference>
<dbReference type="EMBL" id="AK304046">
    <property type="protein sequence ID" value="BAG64957.1"/>
    <property type="molecule type" value="mRNA"/>
</dbReference>
<dbReference type="EMBL" id="AF178030">
    <property type="status" value="NOT_ANNOTATED_CDS"/>
    <property type="molecule type" value="Genomic_DNA"/>
</dbReference>
<dbReference type="EMBL" id="BC125020">
    <property type="protein sequence ID" value="AAI25021.1"/>
    <property type="status" value="ALT_SEQ"/>
    <property type="molecule type" value="mRNA"/>
</dbReference>
<dbReference type="CCDS" id="CCDS6318.2">
    <molecule id="Q9UHF7-2"/>
</dbReference>
<dbReference type="CCDS" id="CCDS64957.1">
    <molecule id="Q9UHF7-3"/>
</dbReference>
<dbReference type="CCDS" id="CCDS83316.1">
    <molecule id="Q9UHF7-1"/>
</dbReference>
<dbReference type="RefSeq" id="NP_001269831.1">
    <molecule id="Q9UHF7-3"/>
    <property type="nucleotide sequence ID" value="NM_001282902.3"/>
</dbReference>
<dbReference type="RefSeq" id="NP_001269832.1">
    <property type="nucleotide sequence ID" value="NM_001282903.2"/>
</dbReference>
<dbReference type="RefSeq" id="NP_001317528.1">
    <molecule id="Q9UHF7-1"/>
    <property type="nucleotide sequence ID" value="NM_001330599.2"/>
</dbReference>
<dbReference type="RefSeq" id="NP_054831.2">
    <molecule id="Q9UHF7-2"/>
    <property type="nucleotide sequence ID" value="NM_014112.5"/>
</dbReference>
<dbReference type="RefSeq" id="XP_006716688.1">
    <property type="nucleotide sequence ID" value="XM_006716625.1"/>
</dbReference>
<dbReference type="RefSeq" id="XP_011515566.1">
    <property type="nucleotide sequence ID" value="XM_011517264.1"/>
</dbReference>
<dbReference type="RefSeq" id="XP_011515568.1">
    <property type="nucleotide sequence ID" value="XM_011517266.2"/>
</dbReference>
<dbReference type="RefSeq" id="XP_011515570.1">
    <property type="nucleotide sequence ID" value="XM_011517268.1"/>
</dbReference>
<dbReference type="BioGRID" id="113078">
    <property type="interactions" value="144"/>
</dbReference>
<dbReference type="ELM" id="Q9UHF7"/>
<dbReference type="FunCoup" id="Q9UHF7">
    <property type="interactions" value="1776"/>
</dbReference>
<dbReference type="IntAct" id="Q9UHF7">
    <property type="interactions" value="109"/>
</dbReference>
<dbReference type="MINT" id="Q9UHF7"/>
<dbReference type="STRING" id="9606.ENSP00000379065"/>
<dbReference type="GlyGen" id="Q9UHF7">
    <property type="glycosylation" value="4 sites, 1 O-linked glycan (4 sites)"/>
</dbReference>
<dbReference type="iPTMnet" id="Q9UHF7"/>
<dbReference type="PhosphoSitePlus" id="Q9UHF7"/>
<dbReference type="BioMuta" id="TRPS1"/>
<dbReference type="DMDM" id="20140909"/>
<dbReference type="jPOST" id="Q9UHF7"/>
<dbReference type="MassIVE" id="Q9UHF7"/>
<dbReference type="PaxDb" id="9606-ENSP00000379065"/>
<dbReference type="PeptideAtlas" id="Q9UHF7"/>
<dbReference type="ProteomicsDB" id="84344">
    <molecule id="Q9UHF7-1"/>
</dbReference>
<dbReference type="ProteomicsDB" id="84345">
    <molecule id="Q9UHF7-2"/>
</dbReference>
<dbReference type="ProteomicsDB" id="84346">
    <molecule id="Q9UHF7-3"/>
</dbReference>
<dbReference type="Pumba" id="Q9UHF7"/>
<dbReference type="Antibodypedia" id="42950">
    <property type="antibodies" value="166 antibodies from 27 providers"/>
</dbReference>
<dbReference type="DNASU" id="7227"/>
<dbReference type="Ensembl" id="ENST00000220888.9">
    <molecule id="Q9UHF7-1"/>
    <property type="protein sequence ID" value="ENSP00000220888.5"/>
    <property type="gene ID" value="ENSG00000104447.13"/>
</dbReference>
<dbReference type="Ensembl" id="ENST00000395715.8">
    <molecule id="Q9UHF7-2"/>
    <property type="protein sequence ID" value="ENSP00000379065.3"/>
    <property type="gene ID" value="ENSG00000104447.13"/>
</dbReference>
<dbReference type="Ensembl" id="ENST00000520276.5">
    <molecule id="Q9UHF7-3"/>
    <property type="protein sequence ID" value="ENSP00000428680.1"/>
    <property type="gene ID" value="ENSG00000104447.13"/>
</dbReference>
<dbReference type="Ensembl" id="ENST00000640765.1">
    <molecule id="Q9UHF7-1"/>
    <property type="protein sequence ID" value="ENSP00000492037.1"/>
    <property type="gene ID" value="ENSG00000104447.13"/>
</dbReference>
<dbReference type="GeneID" id="7227"/>
<dbReference type="KEGG" id="hsa:7227"/>
<dbReference type="MANE-Select" id="ENST00000395715.8">
    <molecule id="Q9UHF7-2"/>
    <property type="protein sequence ID" value="ENSP00000379065.3"/>
    <property type="RefSeq nucleotide sequence ID" value="NM_014112.5"/>
    <property type="RefSeq protein sequence ID" value="NP_054831.2"/>
</dbReference>
<dbReference type="UCSC" id="uc003yny.5">
    <molecule id="Q9UHF7-1"/>
    <property type="organism name" value="human"/>
</dbReference>
<dbReference type="AGR" id="HGNC:12340"/>
<dbReference type="CTD" id="7227"/>
<dbReference type="DisGeNET" id="7227"/>
<dbReference type="GeneCards" id="TRPS1"/>
<dbReference type="GeneReviews" id="TRPS1"/>
<dbReference type="HGNC" id="HGNC:12340">
    <property type="gene designation" value="TRPS1"/>
</dbReference>
<dbReference type="HPA" id="ENSG00000104447">
    <property type="expression patterns" value="Tissue enriched (breast)"/>
</dbReference>
<dbReference type="MalaCards" id="TRPS1"/>
<dbReference type="MIM" id="150230">
    <property type="type" value="phenotype"/>
</dbReference>
<dbReference type="MIM" id="190350">
    <property type="type" value="phenotype"/>
</dbReference>
<dbReference type="MIM" id="190351">
    <property type="type" value="phenotype"/>
</dbReference>
<dbReference type="MIM" id="604386">
    <property type="type" value="gene"/>
</dbReference>
<dbReference type="neXtProt" id="NX_Q9UHF7"/>
<dbReference type="OpenTargets" id="ENSG00000104447"/>
<dbReference type="Orphanet" id="77258">
    <property type="disease" value="Trichorhinophalangeal syndrome type 1"/>
</dbReference>
<dbReference type="Orphanet" id="502">
    <property type="disease" value="Trichorhinophalangeal syndrome type 2"/>
</dbReference>
<dbReference type="PharmGKB" id="PA37013"/>
<dbReference type="VEuPathDB" id="HostDB:ENSG00000104447"/>
<dbReference type="eggNOG" id="KOG1601">
    <property type="taxonomic scope" value="Eukaryota"/>
</dbReference>
<dbReference type="GeneTree" id="ENSGT00940000157893"/>
<dbReference type="InParanoid" id="Q9UHF7"/>
<dbReference type="OMA" id="YESCHSM"/>
<dbReference type="OrthoDB" id="515401at2759"/>
<dbReference type="PAN-GO" id="Q9UHF7">
    <property type="GO annotations" value="2 GO annotations based on evolutionary models"/>
</dbReference>
<dbReference type="PhylomeDB" id="Q9UHF7"/>
<dbReference type="TreeFam" id="TF350812"/>
<dbReference type="PathwayCommons" id="Q9UHF7"/>
<dbReference type="SignaLink" id="Q9UHF7"/>
<dbReference type="SIGNOR" id="Q9UHF7"/>
<dbReference type="BioGRID-ORCS" id="7227">
    <property type="hits" value="36 hits in 1182 CRISPR screens"/>
</dbReference>
<dbReference type="ChiTaRS" id="TRPS1">
    <property type="organism name" value="human"/>
</dbReference>
<dbReference type="GeneWiki" id="Tricho-rhino-phalangeal_syndrome_Type_1"/>
<dbReference type="GenomeRNAi" id="7227"/>
<dbReference type="Pharos" id="Q9UHF7">
    <property type="development level" value="Tbio"/>
</dbReference>
<dbReference type="PRO" id="PR:Q9UHF7"/>
<dbReference type="Proteomes" id="UP000005640">
    <property type="component" value="Chromosome 8"/>
</dbReference>
<dbReference type="RNAct" id="Q9UHF7">
    <property type="molecule type" value="protein"/>
</dbReference>
<dbReference type="Bgee" id="ENSG00000104447">
    <property type="expression patterns" value="Expressed in mammary duct and 204 other cell types or tissues"/>
</dbReference>
<dbReference type="ExpressionAtlas" id="Q9UHF7">
    <property type="expression patterns" value="baseline and differential"/>
</dbReference>
<dbReference type="GO" id="GO:0000785">
    <property type="term" value="C:chromatin"/>
    <property type="evidence" value="ECO:0000314"/>
    <property type="project" value="BHF-UCL"/>
</dbReference>
<dbReference type="GO" id="GO:0005654">
    <property type="term" value="C:nucleoplasm"/>
    <property type="evidence" value="ECO:0000314"/>
    <property type="project" value="HPA"/>
</dbReference>
<dbReference type="GO" id="GO:0005634">
    <property type="term" value="C:nucleus"/>
    <property type="evidence" value="ECO:0000314"/>
    <property type="project" value="UniProtKB"/>
</dbReference>
<dbReference type="GO" id="GO:0032991">
    <property type="term" value="C:protein-containing complex"/>
    <property type="evidence" value="ECO:0000315"/>
    <property type="project" value="CAFA"/>
</dbReference>
<dbReference type="GO" id="GO:0003700">
    <property type="term" value="F:DNA-binding transcription factor activity"/>
    <property type="evidence" value="ECO:0000304"/>
    <property type="project" value="ProtInc"/>
</dbReference>
<dbReference type="GO" id="GO:0001227">
    <property type="term" value="F:DNA-binding transcription repressor activity, RNA polymerase II-specific"/>
    <property type="evidence" value="ECO:0000314"/>
    <property type="project" value="NTNU_SB"/>
</dbReference>
<dbReference type="GO" id="GO:0019904">
    <property type="term" value="F:protein domain specific binding"/>
    <property type="evidence" value="ECO:0000353"/>
    <property type="project" value="CAFA"/>
</dbReference>
<dbReference type="GO" id="GO:0000977">
    <property type="term" value="F:RNA polymerase II transcription regulatory region sequence-specific DNA binding"/>
    <property type="evidence" value="ECO:0000314"/>
    <property type="project" value="NTNU_SB"/>
</dbReference>
<dbReference type="GO" id="GO:0008270">
    <property type="term" value="F:zinc ion binding"/>
    <property type="evidence" value="ECO:0000304"/>
    <property type="project" value="ProtInc"/>
</dbReference>
<dbReference type="GO" id="GO:0000122">
    <property type="term" value="P:negative regulation of transcription by RNA polymerase II"/>
    <property type="evidence" value="ECO:0000314"/>
    <property type="project" value="UniProtKB"/>
</dbReference>
<dbReference type="GO" id="GO:0032330">
    <property type="term" value="P:regulation of chondrocyte differentiation"/>
    <property type="evidence" value="ECO:0000250"/>
    <property type="project" value="UniProtKB"/>
</dbReference>
<dbReference type="GO" id="GO:0006357">
    <property type="term" value="P:regulation of transcription by RNA polymerase II"/>
    <property type="evidence" value="ECO:0000318"/>
    <property type="project" value="GO_Central"/>
</dbReference>
<dbReference type="GO" id="GO:0001501">
    <property type="term" value="P:skeletal system development"/>
    <property type="evidence" value="ECO:0000315"/>
    <property type="project" value="UniProtKB"/>
</dbReference>
<dbReference type="CDD" id="cd00202">
    <property type="entry name" value="ZnF_GATA"/>
    <property type="match status" value="1"/>
</dbReference>
<dbReference type="FunFam" id="3.30.160.60:FF:001213">
    <property type="entry name" value="Transcriptional repressor GATA binding 1"/>
    <property type="match status" value="1"/>
</dbReference>
<dbReference type="FunFam" id="3.30.50.10:FF:000020">
    <property type="entry name" value="Zinc finger transcription factor Trps1"/>
    <property type="match status" value="1"/>
</dbReference>
<dbReference type="FunFam" id="3.30.160.60:FF:000674">
    <property type="entry name" value="zinc finger transcription factor Trps1 isoform X2"/>
    <property type="match status" value="1"/>
</dbReference>
<dbReference type="Gene3D" id="3.30.160.60">
    <property type="entry name" value="Classic Zinc Finger"/>
    <property type="match status" value="2"/>
</dbReference>
<dbReference type="Gene3D" id="3.30.50.10">
    <property type="entry name" value="Erythroid Transcription Factor GATA-1, subunit A"/>
    <property type="match status" value="1"/>
</dbReference>
<dbReference type="InterPro" id="IPR028440">
    <property type="entry name" value="TRPS1"/>
</dbReference>
<dbReference type="InterPro" id="IPR036236">
    <property type="entry name" value="Znf_C2H2_sf"/>
</dbReference>
<dbReference type="InterPro" id="IPR013087">
    <property type="entry name" value="Znf_C2H2_type"/>
</dbReference>
<dbReference type="InterPro" id="IPR000679">
    <property type="entry name" value="Znf_GATA"/>
</dbReference>
<dbReference type="InterPro" id="IPR013088">
    <property type="entry name" value="Znf_NHR/GATA"/>
</dbReference>
<dbReference type="PANTHER" id="PTHR47034">
    <property type="entry name" value="ZINC FINGER TRANSCRIPTION FACTOR TRPS1"/>
    <property type="match status" value="1"/>
</dbReference>
<dbReference type="PANTHER" id="PTHR47034:SF1">
    <property type="entry name" value="ZINC FINGER TRANSCRIPTION FACTOR TRPS1"/>
    <property type="match status" value="1"/>
</dbReference>
<dbReference type="Pfam" id="PF00320">
    <property type="entry name" value="GATA"/>
    <property type="match status" value="1"/>
</dbReference>
<dbReference type="PRINTS" id="PR00619">
    <property type="entry name" value="GATAZNFINGER"/>
</dbReference>
<dbReference type="SMART" id="SM00355">
    <property type="entry name" value="ZnF_C2H2"/>
    <property type="match status" value="9"/>
</dbReference>
<dbReference type="SMART" id="SM00401">
    <property type="entry name" value="ZnF_GATA"/>
    <property type="match status" value="1"/>
</dbReference>
<dbReference type="SUPFAM" id="SSF57667">
    <property type="entry name" value="beta-beta-alpha zinc fingers"/>
    <property type="match status" value="1"/>
</dbReference>
<dbReference type="SUPFAM" id="SSF57716">
    <property type="entry name" value="Glucocorticoid receptor-like (DNA-binding domain)"/>
    <property type="match status" value="1"/>
</dbReference>
<dbReference type="PROSITE" id="PS00344">
    <property type="entry name" value="GATA_ZN_FINGER_1"/>
    <property type="match status" value="1"/>
</dbReference>
<dbReference type="PROSITE" id="PS50114">
    <property type="entry name" value="GATA_ZN_FINGER_2"/>
    <property type="match status" value="1"/>
</dbReference>
<dbReference type="PROSITE" id="PS00028">
    <property type="entry name" value="ZINC_FINGER_C2H2_1"/>
    <property type="match status" value="2"/>
</dbReference>
<dbReference type="PROSITE" id="PS50157">
    <property type="entry name" value="ZINC_FINGER_C2H2_2"/>
    <property type="match status" value="1"/>
</dbReference>
<protein>
    <recommendedName>
        <fullName>Zinc finger transcription factor Trps1</fullName>
    </recommendedName>
    <alternativeName>
        <fullName>Tricho-rhino-phalangeal syndrome type I protein</fullName>
    </alternativeName>
    <alternativeName>
        <fullName>Zinc finger protein GC79</fullName>
    </alternativeName>
</protein>
<evidence type="ECO:0000250" key="1"/>
<evidence type="ECO:0000250" key="2">
    <source>
        <dbReference type="UniProtKB" id="Q925H1"/>
    </source>
</evidence>
<evidence type="ECO:0000255" key="3">
    <source>
        <dbReference type="PROSITE-ProRule" id="PRU00042"/>
    </source>
</evidence>
<evidence type="ECO:0000255" key="4">
    <source>
        <dbReference type="PROSITE-ProRule" id="PRU00094"/>
    </source>
</evidence>
<evidence type="ECO:0000256" key="5">
    <source>
        <dbReference type="SAM" id="MobiDB-lite"/>
    </source>
</evidence>
<evidence type="ECO:0000269" key="6">
    <source>
    </source>
</evidence>
<evidence type="ECO:0000269" key="7">
    <source>
    </source>
</evidence>
<evidence type="ECO:0000269" key="8">
    <source>
    </source>
</evidence>
<evidence type="ECO:0000269" key="9">
    <source>
    </source>
</evidence>
<evidence type="ECO:0000269" key="10">
    <source>
    </source>
</evidence>
<evidence type="ECO:0000269" key="11">
    <source>
    </source>
</evidence>
<evidence type="ECO:0000303" key="12">
    <source>
    </source>
</evidence>
<evidence type="ECO:0000303" key="13">
    <source>
    </source>
</evidence>
<evidence type="ECO:0000305" key="14"/>
<evidence type="ECO:0007744" key="15">
    <source>
    </source>
</evidence>
<evidence type="ECO:0007744" key="16">
    <source>
    </source>
</evidence>
<evidence type="ECO:0007744" key="17">
    <source>
    </source>
</evidence>
<evidence type="ECO:0007744" key="18">
    <source>
    </source>
</evidence>
<evidence type="ECO:0007744" key="19">
    <source>
    </source>
</evidence>
<evidence type="ECO:0007744" key="20">
    <source>
    </source>
</evidence>
<evidence type="ECO:0007744" key="21">
    <source>
    </source>
</evidence>
<evidence type="ECO:0007744" key="22">
    <source>
    </source>
</evidence>
<sequence length="1281" mass="141521">MVRKKNPPLRNVASEGEGQILEPIGTESKVSGKNKEFSADQMSENTDQSDAAELNHKEEHSLHVQDPSSSSKKDLKSAVLSEKAGFNYESPSKGGNFPSFPHDEVTDRNMLAFSSPAAGGVCEPLKSPQRAEADDPQDMACTPSGDSLETKEDQKMSPKATEETGQAQSGQANCQGLSPVSVASKNPQVPSDGGVRLNKSKTDLLVNDNPDPAPLSPELQDFKCNICGYGYYGNDPTDLIKHFRKYHLGLHNRTRQDAELDSKILALHNMVQFSHSKDFQKVNRSVFSGVLQDINSSRPVLLNGTYDVQVTSGGTFIGIGRKTPDCQGNTKYFRCKFCNFTYMGNSSTELEQHFLQTHPNKIKASLPSSEVAKPSEKNSNKSIPALQSSDSGDLGKWQDKITVKAGDDTPVGYSVPIKPLDSSRQNGTEATSYYWCKFCSFSCESSSSLKLLEHYGKQHGAVQSGGLNPELNDKLSRGSVINQNDLAKSSEGETMTKTDKSSSGAKKKDFSSKGAEDNMVTSYNCQFCDFRYSKSHGPDVIVVGPLLRHYQQLHNIHKCTIKHCPFCPRGLCSPEKHLGEITYPFACRKSNCSHCALLLLHLSPGAAGSSRVKHQCHQCSFTTPDVDVLLFHYESVHESQASDVKQEANHLQGSDGQQSVKESKEHSCTKCDFITQVEEEISRHYRRAHSCYKCRQCSFTAADTQSLLEHFNTVHCQEQDITTANGEEDGHAISTIKEEPKIDFRVYNLLTPDSKMGEPVSESVVKREKLEEKDGLKEKVWTESSSDDLRNVTWRGADILRGSPSYTQASLGLLTPVSGTQEQTKTLRDSPNVEAAHLARPIYGLAVETKGFLQGAPAGGEKSGALPQQYPASGENKSKDESQSLLRRRRGSGVFCANCLTTKTSLWRKNANGGYVCNACGLYQKLHSTPRPLNIIKQNNGEQIIRRRTRKRLNPEALQAEQLNKQQRGSNEEQVNGSPLERRSEDHLTESHQREIPLPSLSKYEAQGSLTKSHSAQQPVLVSQTLDIHKRMQPLHIQIKSPQESTGDPGNSSSVSEGKGSSERGSPIEKYMRPAKHPNYSPPGSPIEKYQYPLFGLPFVHNDFQSEADWLRFWSKYKLSVPGNPHYLSHVPGLPNPCQNYVPYPTFNLPPHFSAVGSDNDIPLDLAIKHSRPGPTANGASKEKTKAPPNVKNEGPLNVVKTEKVDRSTQDELSTKCVHCGIVFLDEVMYALHMSCHGDSGPFQCSICQHLCTDKYDFTTHIQRGLHRNNAQVEKNGKPKE</sequence>